<gene>
    <name type="primary">Cdk10</name>
</gene>
<comment type="function">
    <text evidence="1">Cyclin-dependent kinase that phosphorylates the transcription factor ETS2 (in vitro) and positively controls its proteasomal degradation (in cells). Involved in the regulation of actin cytoskeleton organization through the phosphorylation of actin dynamics regulators such as PKN2. Is a negative regulator of ciliogenesis through phosphorylation of PKN2 and promotion of RhoA signaling.</text>
</comment>
<comment type="catalytic activity">
    <reaction>
        <text>L-seryl-[protein] + ATP = O-phospho-L-seryl-[protein] + ADP + H(+)</text>
        <dbReference type="Rhea" id="RHEA:17989"/>
        <dbReference type="Rhea" id="RHEA-COMP:9863"/>
        <dbReference type="Rhea" id="RHEA-COMP:11604"/>
        <dbReference type="ChEBI" id="CHEBI:15378"/>
        <dbReference type="ChEBI" id="CHEBI:29999"/>
        <dbReference type="ChEBI" id="CHEBI:30616"/>
        <dbReference type="ChEBI" id="CHEBI:83421"/>
        <dbReference type="ChEBI" id="CHEBI:456216"/>
        <dbReference type="EC" id="2.7.11.22"/>
    </reaction>
</comment>
<comment type="catalytic activity">
    <reaction>
        <text>L-threonyl-[protein] + ATP = O-phospho-L-threonyl-[protein] + ADP + H(+)</text>
        <dbReference type="Rhea" id="RHEA:46608"/>
        <dbReference type="Rhea" id="RHEA-COMP:11060"/>
        <dbReference type="Rhea" id="RHEA-COMP:11605"/>
        <dbReference type="ChEBI" id="CHEBI:15378"/>
        <dbReference type="ChEBI" id="CHEBI:30013"/>
        <dbReference type="ChEBI" id="CHEBI:30616"/>
        <dbReference type="ChEBI" id="CHEBI:61977"/>
        <dbReference type="ChEBI" id="CHEBI:456216"/>
        <dbReference type="EC" id="2.7.11.22"/>
    </reaction>
</comment>
<comment type="subunit">
    <text evidence="1">Heterodimer with CCNQ, the interaction is required for kinase activity. Interacts with ETS2. Interacts with PRK2.</text>
</comment>
<comment type="subcellular location">
    <subcellularLocation>
        <location evidence="1">Cytoplasm</location>
        <location evidence="1">Cytoskeleton</location>
        <location evidence="1">Cilium basal body</location>
    </subcellularLocation>
</comment>
<comment type="similarity">
    <text evidence="5">Belongs to the protein kinase superfamily. CMGC Ser/Thr protein kinase family. CDC2/CDKX subfamily.</text>
</comment>
<protein>
    <recommendedName>
        <fullName>Cyclin-dependent kinase 10</fullName>
        <ecNumber>2.7.11.22</ecNumber>
    </recommendedName>
    <alternativeName>
        <fullName>Cell division protein kinase 10</fullName>
    </alternativeName>
</protein>
<dbReference type="EC" id="2.7.11.22"/>
<dbReference type="EMBL" id="BC098804">
    <property type="protein sequence ID" value="AAH98804.1"/>
    <property type="molecule type" value="mRNA"/>
</dbReference>
<dbReference type="RefSeq" id="NP_001020893.2">
    <property type="nucleotide sequence ID" value="NM_001025722.2"/>
</dbReference>
<dbReference type="RefSeq" id="NP_001103406.1">
    <property type="nucleotide sequence ID" value="NM_001109936.1"/>
</dbReference>
<dbReference type="RefSeq" id="NP_001103407.1">
    <property type="nucleotide sequence ID" value="NM_001109937.1"/>
</dbReference>
<dbReference type="SMR" id="Q4KM47"/>
<dbReference type="FunCoup" id="Q4KM47">
    <property type="interactions" value="593"/>
</dbReference>
<dbReference type="STRING" id="10116.ENSRNOP00000059465"/>
<dbReference type="iPTMnet" id="Q4KM47"/>
<dbReference type="PhosphoSitePlus" id="Q4KM47"/>
<dbReference type="PaxDb" id="10116-ENSRNOP00000059465"/>
<dbReference type="GeneID" id="361434"/>
<dbReference type="KEGG" id="rno:361434"/>
<dbReference type="UCSC" id="RGD:1304851">
    <property type="organism name" value="rat"/>
</dbReference>
<dbReference type="AGR" id="RGD:1304851"/>
<dbReference type="CTD" id="8558"/>
<dbReference type="RGD" id="1304851">
    <property type="gene designation" value="Cdk10"/>
</dbReference>
<dbReference type="eggNOG" id="KOG0663">
    <property type="taxonomic scope" value="Eukaryota"/>
</dbReference>
<dbReference type="InParanoid" id="Q4KM47"/>
<dbReference type="OrthoDB" id="1732493at2759"/>
<dbReference type="PhylomeDB" id="Q4KM47"/>
<dbReference type="PRO" id="PR:Q4KM47"/>
<dbReference type="Proteomes" id="UP000002494">
    <property type="component" value="Unplaced"/>
</dbReference>
<dbReference type="GO" id="GO:0036064">
    <property type="term" value="C:ciliary basal body"/>
    <property type="evidence" value="ECO:0000250"/>
    <property type="project" value="UniProtKB"/>
</dbReference>
<dbReference type="GO" id="GO:0005737">
    <property type="term" value="C:cytoplasm"/>
    <property type="evidence" value="ECO:0007669"/>
    <property type="project" value="UniProtKB-KW"/>
</dbReference>
<dbReference type="GO" id="GO:0005634">
    <property type="term" value="C:nucleus"/>
    <property type="evidence" value="ECO:0000266"/>
    <property type="project" value="RGD"/>
</dbReference>
<dbReference type="GO" id="GO:0005524">
    <property type="term" value="F:ATP binding"/>
    <property type="evidence" value="ECO:0007669"/>
    <property type="project" value="UniProtKB-KW"/>
</dbReference>
<dbReference type="GO" id="GO:0097472">
    <property type="term" value="F:cyclin-dependent protein kinase activity"/>
    <property type="evidence" value="ECO:0000266"/>
    <property type="project" value="RGD"/>
</dbReference>
<dbReference type="GO" id="GO:0004693">
    <property type="term" value="F:cyclin-dependent protein serine/threonine kinase activity"/>
    <property type="evidence" value="ECO:0007669"/>
    <property type="project" value="UniProtKB-EC"/>
</dbReference>
<dbReference type="GO" id="GO:0106310">
    <property type="term" value="F:protein serine kinase activity"/>
    <property type="evidence" value="ECO:0007669"/>
    <property type="project" value="RHEA"/>
</dbReference>
<dbReference type="GO" id="GO:0004674">
    <property type="term" value="F:protein serine/threonine kinase activity"/>
    <property type="evidence" value="ECO:0000250"/>
    <property type="project" value="UniProtKB"/>
</dbReference>
<dbReference type="GO" id="GO:0030030">
    <property type="term" value="P:cell projection organization"/>
    <property type="evidence" value="ECO:0007669"/>
    <property type="project" value="UniProtKB-KW"/>
</dbReference>
<dbReference type="GO" id="GO:1902018">
    <property type="term" value="P:negative regulation of cilium assembly"/>
    <property type="evidence" value="ECO:0000250"/>
    <property type="project" value="UniProtKB"/>
</dbReference>
<dbReference type="GO" id="GO:0018107">
    <property type="term" value="P:peptidyl-threonine phosphorylation"/>
    <property type="evidence" value="ECO:0000250"/>
    <property type="project" value="UniProtKB"/>
</dbReference>
<dbReference type="GO" id="GO:0043410">
    <property type="term" value="P:positive regulation of MAPK cascade"/>
    <property type="evidence" value="ECO:0000266"/>
    <property type="project" value="RGD"/>
</dbReference>
<dbReference type="GO" id="GO:0032956">
    <property type="term" value="P:regulation of actin cytoskeleton organization"/>
    <property type="evidence" value="ECO:0000250"/>
    <property type="project" value="UniProtKB"/>
</dbReference>
<dbReference type="GO" id="GO:0051726">
    <property type="term" value="P:regulation of cell cycle"/>
    <property type="evidence" value="ECO:0000318"/>
    <property type="project" value="GO_Central"/>
</dbReference>
<dbReference type="GO" id="GO:0007346">
    <property type="term" value="P:regulation of mitotic cell cycle"/>
    <property type="evidence" value="ECO:0007669"/>
    <property type="project" value="InterPro"/>
</dbReference>
<dbReference type="CDD" id="cd07845">
    <property type="entry name" value="STKc_CDK10"/>
    <property type="match status" value="1"/>
</dbReference>
<dbReference type="FunFam" id="1.10.510.10:FF:000289">
    <property type="entry name" value="cyclin-dependent kinase 10 isoform X2"/>
    <property type="match status" value="1"/>
</dbReference>
<dbReference type="FunFam" id="3.30.200.20:FF:000256">
    <property type="entry name" value="cyclin-dependent kinase 10 isoform X2"/>
    <property type="match status" value="1"/>
</dbReference>
<dbReference type="Gene3D" id="3.30.200.20">
    <property type="entry name" value="Phosphorylase Kinase, domain 1"/>
    <property type="match status" value="1"/>
</dbReference>
<dbReference type="Gene3D" id="1.10.510.10">
    <property type="entry name" value="Transferase(Phosphotransferase) domain 1"/>
    <property type="match status" value="1"/>
</dbReference>
<dbReference type="InterPro" id="IPR050108">
    <property type="entry name" value="CDK"/>
</dbReference>
<dbReference type="InterPro" id="IPR011009">
    <property type="entry name" value="Kinase-like_dom_sf"/>
</dbReference>
<dbReference type="InterPro" id="IPR000719">
    <property type="entry name" value="Prot_kinase_dom"/>
</dbReference>
<dbReference type="InterPro" id="IPR017441">
    <property type="entry name" value="Protein_kinase_ATP_BS"/>
</dbReference>
<dbReference type="InterPro" id="IPR008271">
    <property type="entry name" value="Ser/Thr_kinase_AS"/>
</dbReference>
<dbReference type="InterPro" id="IPR044093">
    <property type="entry name" value="STKc_CDK10"/>
</dbReference>
<dbReference type="PANTHER" id="PTHR24056">
    <property type="entry name" value="CELL DIVISION PROTEIN KINASE"/>
    <property type="match status" value="1"/>
</dbReference>
<dbReference type="PANTHER" id="PTHR24056:SF508">
    <property type="entry name" value="CYCLIN-DEPENDENT KINASE 10"/>
    <property type="match status" value="1"/>
</dbReference>
<dbReference type="Pfam" id="PF00069">
    <property type="entry name" value="Pkinase"/>
    <property type="match status" value="1"/>
</dbReference>
<dbReference type="SMART" id="SM00220">
    <property type="entry name" value="S_TKc"/>
    <property type="match status" value="1"/>
</dbReference>
<dbReference type="SUPFAM" id="SSF56112">
    <property type="entry name" value="Protein kinase-like (PK-like)"/>
    <property type="match status" value="1"/>
</dbReference>
<dbReference type="PROSITE" id="PS00107">
    <property type="entry name" value="PROTEIN_KINASE_ATP"/>
    <property type="match status" value="1"/>
</dbReference>
<dbReference type="PROSITE" id="PS50011">
    <property type="entry name" value="PROTEIN_KINASE_DOM"/>
    <property type="match status" value="1"/>
</dbReference>
<dbReference type="PROSITE" id="PS00108">
    <property type="entry name" value="PROTEIN_KINASE_ST"/>
    <property type="match status" value="1"/>
</dbReference>
<reference key="1">
    <citation type="journal article" date="2004" name="Genome Res.">
        <title>The status, quality, and expansion of the NIH full-length cDNA project: the Mammalian Gene Collection (MGC).</title>
        <authorList>
            <consortium name="The MGC Project Team"/>
        </authorList>
    </citation>
    <scope>NUCLEOTIDE SEQUENCE [LARGE SCALE MRNA]</scope>
    <source>
        <tissue>Spleen</tissue>
    </source>
</reference>
<keyword id="KW-0067">ATP-binding</keyword>
<keyword id="KW-0966">Cell projection</keyword>
<keyword id="KW-0970">Cilium biogenesis/degradation</keyword>
<keyword id="KW-0963">Cytoplasm</keyword>
<keyword id="KW-0206">Cytoskeleton</keyword>
<keyword id="KW-0418">Kinase</keyword>
<keyword id="KW-0547">Nucleotide-binding</keyword>
<keyword id="KW-0597">Phosphoprotein</keyword>
<keyword id="KW-1185">Reference proteome</keyword>
<keyword id="KW-0723">Serine/threonine-protein kinase</keyword>
<keyword id="KW-0808">Transferase</keyword>
<evidence type="ECO:0000250" key="1">
    <source>
        <dbReference type="UniProtKB" id="Q15131"/>
    </source>
</evidence>
<evidence type="ECO:0000255" key="2">
    <source>
        <dbReference type="PROSITE-ProRule" id="PRU00159"/>
    </source>
</evidence>
<evidence type="ECO:0000255" key="3">
    <source>
        <dbReference type="PROSITE-ProRule" id="PRU10027"/>
    </source>
</evidence>
<evidence type="ECO:0000256" key="4">
    <source>
        <dbReference type="SAM" id="MobiDB-lite"/>
    </source>
</evidence>
<evidence type="ECO:0000305" key="5"/>
<name>CDK10_RAT</name>
<sequence>MSQCQIWVRHHLCCSFQIPTLAASLFQLGRCRSVKEFEKLNRIGEGTYGIVYRARDTQTDEIVALKKVRMDKEKDGIPISSLREITLLLRLRHPNIVELKEVVVGNHLESIFLVMGYCEQDLASLLENMPTPFSEAQVKCILLQVLRGLQYLHRSFIIHRDLKVSNLLMTDKGCVKTADFGLARAYGVPVKPMTPKVVTLWYRAPELLLGTTTQTTSIDMWAVGCILAELLAHKPLLPGTSEIHQIDLIVQLLGTPSENIWPGFSKLPLAGQYSLRKQPYNNLKHKFPWLSEAGLRLLNFLFMYDPKKRATAGDCLESSYFKEKPLPCEPELMPTFPHHRNKRAAPAATEGQSKRCRP</sequence>
<feature type="chain" id="PRO_0000261029" description="Cyclin-dependent kinase 10">
    <location>
        <begin position="1"/>
        <end position="358"/>
    </location>
</feature>
<feature type="domain" description="Protein kinase" evidence="2">
    <location>
        <begin position="37"/>
        <end position="321"/>
    </location>
</feature>
<feature type="region of interest" description="Disordered" evidence="4">
    <location>
        <begin position="332"/>
        <end position="358"/>
    </location>
</feature>
<feature type="active site" description="Proton acceptor" evidence="2 3">
    <location>
        <position position="161"/>
    </location>
</feature>
<feature type="binding site" evidence="2">
    <location>
        <begin position="43"/>
        <end position="51"/>
    </location>
    <ligand>
        <name>ATP</name>
        <dbReference type="ChEBI" id="CHEBI:30616"/>
    </ligand>
</feature>
<feature type="binding site" evidence="2">
    <location>
        <position position="66"/>
    </location>
    <ligand>
        <name>ATP</name>
        <dbReference type="ChEBI" id="CHEBI:30616"/>
    </ligand>
</feature>
<feature type="modified residue" description="Phosphothreonine" evidence="1">
    <location>
        <position position="194"/>
    </location>
</feature>
<organism>
    <name type="scientific">Rattus norvegicus</name>
    <name type="common">Rat</name>
    <dbReference type="NCBI Taxonomy" id="10116"/>
    <lineage>
        <taxon>Eukaryota</taxon>
        <taxon>Metazoa</taxon>
        <taxon>Chordata</taxon>
        <taxon>Craniata</taxon>
        <taxon>Vertebrata</taxon>
        <taxon>Euteleostomi</taxon>
        <taxon>Mammalia</taxon>
        <taxon>Eutheria</taxon>
        <taxon>Euarchontoglires</taxon>
        <taxon>Glires</taxon>
        <taxon>Rodentia</taxon>
        <taxon>Myomorpha</taxon>
        <taxon>Muroidea</taxon>
        <taxon>Muridae</taxon>
        <taxon>Murinae</taxon>
        <taxon>Rattus</taxon>
    </lineage>
</organism>
<accession>Q4KM47</accession>
<proteinExistence type="evidence at transcript level"/>